<evidence type="ECO:0000255" key="1">
    <source>
        <dbReference type="HAMAP-Rule" id="MF_00210"/>
    </source>
</evidence>
<dbReference type="EC" id="2.5.1.19" evidence="1"/>
<dbReference type="EMBL" id="CP000544">
    <property type="protein sequence ID" value="ABM61351.1"/>
    <property type="molecule type" value="Genomic_DNA"/>
</dbReference>
<dbReference type="RefSeq" id="WP_011813374.1">
    <property type="nucleotide sequence ID" value="NC_008789.1"/>
</dbReference>
<dbReference type="SMR" id="A1WUI9"/>
<dbReference type="STRING" id="349124.Hhal_0565"/>
<dbReference type="KEGG" id="hha:Hhal_0565"/>
<dbReference type="eggNOG" id="COG0128">
    <property type="taxonomic scope" value="Bacteria"/>
</dbReference>
<dbReference type="HOGENOM" id="CLU_024321_0_1_6"/>
<dbReference type="OrthoDB" id="9809920at2"/>
<dbReference type="UniPathway" id="UPA00053">
    <property type="reaction ID" value="UER00089"/>
</dbReference>
<dbReference type="Proteomes" id="UP000000647">
    <property type="component" value="Chromosome"/>
</dbReference>
<dbReference type="GO" id="GO:0005737">
    <property type="term" value="C:cytoplasm"/>
    <property type="evidence" value="ECO:0007669"/>
    <property type="project" value="UniProtKB-SubCell"/>
</dbReference>
<dbReference type="GO" id="GO:0003866">
    <property type="term" value="F:3-phosphoshikimate 1-carboxyvinyltransferase activity"/>
    <property type="evidence" value="ECO:0007669"/>
    <property type="project" value="UniProtKB-UniRule"/>
</dbReference>
<dbReference type="GO" id="GO:0008652">
    <property type="term" value="P:amino acid biosynthetic process"/>
    <property type="evidence" value="ECO:0007669"/>
    <property type="project" value="UniProtKB-KW"/>
</dbReference>
<dbReference type="GO" id="GO:0009073">
    <property type="term" value="P:aromatic amino acid family biosynthetic process"/>
    <property type="evidence" value="ECO:0007669"/>
    <property type="project" value="UniProtKB-KW"/>
</dbReference>
<dbReference type="GO" id="GO:0009423">
    <property type="term" value="P:chorismate biosynthetic process"/>
    <property type="evidence" value="ECO:0007669"/>
    <property type="project" value="UniProtKB-UniRule"/>
</dbReference>
<dbReference type="CDD" id="cd01556">
    <property type="entry name" value="EPSP_synthase"/>
    <property type="match status" value="1"/>
</dbReference>
<dbReference type="FunFam" id="3.65.10.10:FF:000005">
    <property type="entry name" value="3-phosphoshikimate 1-carboxyvinyltransferase"/>
    <property type="match status" value="1"/>
</dbReference>
<dbReference type="FunFam" id="3.65.10.10:FF:000006">
    <property type="entry name" value="3-phosphoshikimate 1-carboxyvinyltransferase"/>
    <property type="match status" value="1"/>
</dbReference>
<dbReference type="Gene3D" id="3.65.10.10">
    <property type="entry name" value="Enolpyruvate transferase domain"/>
    <property type="match status" value="2"/>
</dbReference>
<dbReference type="HAMAP" id="MF_00210">
    <property type="entry name" value="EPSP_synth"/>
    <property type="match status" value="1"/>
</dbReference>
<dbReference type="InterPro" id="IPR001986">
    <property type="entry name" value="Enolpyruvate_Tfrase_dom"/>
</dbReference>
<dbReference type="InterPro" id="IPR036968">
    <property type="entry name" value="Enolpyruvate_Tfrase_sf"/>
</dbReference>
<dbReference type="InterPro" id="IPR006264">
    <property type="entry name" value="EPSP_synthase"/>
</dbReference>
<dbReference type="InterPro" id="IPR023193">
    <property type="entry name" value="EPSP_synthase_CS"/>
</dbReference>
<dbReference type="InterPro" id="IPR013792">
    <property type="entry name" value="RNA3'P_cycl/enolpyr_Trfase_a/b"/>
</dbReference>
<dbReference type="NCBIfam" id="TIGR01356">
    <property type="entry name" value="aroA"/>
    <property type="match status" value="1"/>
</dbReference>
<dbReference type="PANTHER" id="PTHR21090">
    <property type="entry name" value="AROM/DEHYDROQUINATE SYNTHASE"/>
    <property type="match status" value="1"/>
</dbReference>
<dbReference type="PANTHER" id="PTHR21090:SF5">
    <property type="entry name" value="PENTAFUNCTIONAL AROM POLYPEPTIDE"/>
    <property type="match status" value="1"/>
</dbReference>
<dbReference type="Pfam" id="PF00275">
    <property type="entry name" value="EPSP_synthase"/>
    <property type="match status" value="1"/>
</dbReference>
<dbReference type="PIRSF" id="PIRSF000505">
    <property type="entry name" value="EPSPS"/>
    <property type="match status" value="1"/>
</dbReference>
<dbReference type="SUPFAM" id="SSF55205">
    <property type="entry name" value="EPT/RTPC-like"/>
    <property type="match status" value="1"/>
</dbReference>
<dbReference type="PROSITE" id="PS00104">
    <property type="entry name" value="EPSP_SYNTHASE_1"/>
    <property type="match status" value="1"/>
</dbReference>
<dbReference type="PROSITE" id="PS00885">
    <property type="entry name" value="EPSP_SYNTHASE_2"/>
    <property type="match status" value="1"/>
</dbReference>
<feature type="chain" id="PRO_0000325350" description="3-phosphoshikimate 1-carboxyvinyltransferase">
    <location>
        <begin position="1"/>
        <end position="444"/>
    </location>
</feature>
<feature type="active site" description="Proton acceptor" evidence="1">
    <location>
        <position position="318"/>
    </location>
</feature>
<feature type="binding site" evidence="1">
    <location>
        <position position="24"/>
    </location>
    <ligand>
        <name>3-phosphoshikimate</name>
        <dbReference type="ChEBI" id="CHEBI:145989"/>
    </ligand>
</feature>
<feature type="binding site" evidence="1">
    <location>
        <position position="24"/>
    </location>
    <ligand>
        <name>phosphoenolpyruvate</name>
        <dbReference type="ChEBI" id="CHEBI:58702"/>
    </ligand>
</feature>
<feature type="binding site" evidence="1">
    <location>
        <position position="25"/>
    </location>
    <ligand>
        <name>3-phosphoshikimate</name>
        <dbReference type="ChEBI" id="CHEBI:145989"/>
    </ligand>
</feature>
<feature type="binding site" evidence="1">
    <location>
        <position position="29"/>
    </location>
    <ligand>
        <name>3-phosphoshikimate</name>
        <dbReference type="ChEBI" id="CHEBI:145989"/>
    </ligand>
</feature>
<feature type="binding site" evidence="1">
    <location>
        <position position="97"/>
    </location>
    <ligand>
        <name>phosphoenolpyruvate</name>
        <dbReference type="ChEBI" id="CHEBI:58702"/>
    </ligand>
</feature>
<feature type="binding site" evidence="1">
    <location>
        <position position="125"/>
    </location>
    <ligand>
        <name>phosphoenolpyruvate</name>
        <dbReference type="ChEBI" id="CHEBI:58702"/>
    </ligand>
</feature>
<feature type="binding site" evidence="1">
    <location>
        <position position="170"/>
    </location>
    <ligand>
        <name>3-phosphoshikimate</name>
        <dbReference type="ChEBI" id="CHEBI:145989"/>
    </ligand>
</feature>
<feature type="binding site" evidence="1">
    <location>
        <position position="172"/>
    </location>
    <ligand>
        <name>3-phosphoshikimate</name>
        <dbReference type="ChEBI" id="CHEBI:145989"/>
    </ligand>
</feature>
<feature type="binding site" evidence="1">
    <location>
        <position position="172"/>
    </location>
    <ligand>
        <name>phosphoenolpyruvate</name>
        <dbReference type="ChEBI" id="CHEBI:58702"/>
    </ligand>
</feature>
<feature type="binding site" evidence="1">
    <location>
        <position position="318"/>
    </location>
    <ligand>
        <name>3-phosphoshikimate</name>
        <dbReference type="ChEBI" id="CHEBI:145989"/>
    </ligand>
</feature>
<feature type="binding site" evidence="1">
    <location>
        <position position="345"/>
    </location>
    <ligand>
        <name>3-phosphoshikimate</name>
        <dbReference type="ChEBI" id="CHEBI:145989"/>
    </ligand>
</feature>
<feature type="binding site" evidence="1">
    <location>
        <position position="349"/>
    </location>
    <ligand>
        <name>phosphoenolpyruvate</name>
        <dbReference type="ChEBI" id="CHEBI:58702"/>
    </ligand>
</feature>
<feature type="binding site" evidence="1">
    <location>
        <position position="391"/>
    </location>
    <ligand>
        <name>phosphoenolpyruvate</name>
        <dbReference type="ChEBI" id="CHEBI:58702"/>
    </ligand>
</feature>
<name>AROA_HALHL</name>
<comment type="function">
    <text evidence="1">Catalyzes the transfer of the enolpyruvyl moiety of phosphoenolpyruvate (PEP) to the 5-hydroxyl of shikimate-3-phosphate (S3P) to produce enolpyruvyl shikimate-3-phosphate and inorganic phosphate.</text>
</comment>
<comment type="catalytic activity">
    <reaction evidence="1">
        <text>3-phosphoshikimate + phosphoenolpyruvate = 5-O-(1-carboxyvinyl)-3-phosphoshikimate + phosphate</text>
        <dbReference type="Rhea" id="RHEA:21256"/>
        <dbReference type="ChEBI" id="CHEBI:43474"/>
        <dbReference type="ChEBI" id="CHEBI:57701"/>
        <dbReference type="ChEBI" id="CHEBI:58702"/>
        <dbReference type="ChEBI" id="CHEBI:145989"/>
        <dbReference type="EC" id="2.5.1.19"/>
    </reaction>
    <physiologicalReaction direction="left-to-right" evidence="1">
        <dbReference type="Rhea" id="RHEA:21257"/>
    </physiologicalReaction>
</comment>
<comment type="pathway">
    <text evidence="1">Metabolic intermediate biosynthesis; chorismate biosynthesis; chorismate from D-erythrose 4-phosphate and phosphoenolpyruvate: step 6/7.</text>
</comment>
<comment type="subunit">
    <text evidence="1">Monomer.</text>
</comment>
<comment type="subcellular location">
    <subcellularLocation>
        <location evidence="1">Cytoplasm</location>
    </subcellularLocation>
</comment>
<comment type="similarity">
    <text evidence="1">Belongs to the EPSP synthase family.</text>
</comment>
<keyword id="KW-0028">Amino-acid biosynthesis</keyword>
<keyword id="KW-0057">Aromatic amino acid biosynthesis</keyword>
<keyword id="KW-0963">Cytoplasm</keyword>
<keyword id="KW-1185">Reference proteome</keyword>
<keyword id="KW-0808">Transferase</keyword>
<organism>
    <name type="scientific">Halorhodospira halophila (strain DSM 244 / SL1)</name>
    <name type="common">Ectothiorhodospira halophila (strain DSM 244 / SL1)</name>
    <dbReference type="NCBI Taxonomy" id="349124"/>
    <lineage>
        <taxon>Bacteria</taxon>
        <taxon>Pseudomonadati</taxon>
        <taxon>Pseudomonadota</taxon>
        <taxon>Gammaproteobacteria</taxon>
        <taxon>Chromatiales</taxon>
        <taxon>Ectothiorhodospiraceae</taxon>
        <taxon>Halorhodospira</taxon>
    </lineage>
</organism>
<accession>A1WUI9</accession>
<gene>
    <name evidence="1" type="primary">aroA</name>
    <name type="ordered locus">Hhal_0565</name>
</gene>
<protein>
    <recommendedName>
        <fullName evidence="1">3-phosphoshikimate 1-carboxyvinyltransferase</fullName>
        <ecNumber evidence="1">2.5.1.19</ecNumber>
    </recommendedName>
    <alternativeName>
        <fullName evidence="1">5-enolpyruvylshikimate-3-phosphate synthase</fullName>
        <shortName evidence="1">EPSP synthase</shortName>
        <shortName evidence="1">EPSPS</shortName>
    </alternativeName>
</protein>
<reference key="1">
    <citation type="submission" date="2006-12" db="EMBL/GenBank/DDBJ databases">
        <title>Complete sequence of Halorhodospira halophila SL1.</title>
        <authorList>
            <consortium name="US DOE Joint Genome Institute"/>
            <person name="Copeland A."/>
            <person name="Lucas S."/>
            <person name="Lapidus A."/>
            <person name="Barry K."/>
            <person name="Detter J.C."/>
            <person name="Glavina del Rio T."/>
            <person name="Hammon N."/>
            <person name="Israni S."/>
            <person name="Dalin E."/>
            <person name="Tice H."/>
            <person name="Pitluck S."/>
            <person name="Saunders E."/>
            <person name="Brettin T."/>
            <person name="Bruce D."/>
            <person name="Han C."/>
            <person name="Tapia R."/>
            <person name="Schmutz J."/>
            <person name="Larimer F."/>
            <person name="Land M."/>
            <person name="Hauser L."/>
            <person name="Kyrpides N."/>
            <person name="Mikhailova N."/>
            <person name="Hoff W."/>
            <person name="Richardson P."/>
        </authorList>
    </citation>
    <scope>NUCLEOTIDE SEQUENCE [LARGE SCALE GENOMIC DNA]</scope>
    <source>
        <strain>DSM 244 / SL1</strain>
    </source>
</reference>
<proteinExistence type="inferred from homology"/>
<sequence>MEGENWRVAPGGALHGEARVPGDKSISHRAVMLGALADGTTRITGMLEGADVLATIDVFRALGVAIEGPEQGAVTVHGVGWEGLRPPARELDVGNSGTSMRLLAGLLAGLPFDTVLTGDASLNRRPMRRVTEPLAEMGARITTSDAGTAPLRIHGGSPLAGIDYTLPVASAQVKSALLLAGMRAEGHTCVTEPAPTRDHTERMLQGFGYPVSRDLATVCLEGGRRLYGTGVDVPADISSAAFLLVAASIAPGSDLTLRHVGWNPTRTGVVEILRRMGADIEVLSTDEVGGEPVADLRVRSAALRGIAIPEELVPLAIDEFPALFIAAACAEGETQLTGAAELRVKESDRIAVMAEGLQTLGVTVEPREDGVRIVGQPVLGGGRVHSHTDHRIAMAFAVAALRAEAPVEIEACENVRTSFPGFVELLRRLGMGVEVDGPHDRGTA</sequence>